<name>PURA_BRUA4</name>
<proteinExistence type="inferred from homology"/>
<sequence>MANVVVVGSQWGDEGKGKIVDWLSERADVIVRYQGGHNAGHTLVIDGVSYKLSLLPSGLVRGKLSVIGNGVVVDPHHFVAETEKLRAQGIDINPDVLRIAENAPLILSIHRDLDAMREGSNSGLKIGTTKRGIGPAYEDKVGRRAIRVIDLAEPETLQPKVERLLAHHNLLRRGMGLEEIAVETILTELTSVADQILPYIDQVWRVLDERRKAGDRILFEGAQGALLDNDHGTYPFVTSSNTVAGQAAAGSGLGPTAIGYVLGITKAYTTRVGEGPFPTELNDEIGEFLGTKGHEFGVVTGRKRRCGWFDAVIVRQTVRTSGITGIALTKLDVLDGLDEIKICVAYELDGKRIDYLPSSMGAQARVKPIYETLPGWSETTAGARSWNDLPAQAVKYVRHIEELIGAPVAMLSTSPEREDTILVTDPFHD</sequence>
<organism>
    <name type="scientific">Brucella anthropi (strain ATCC 49188 / DSM 6882 / CCUG 24695 / JCM 21032 / LMG 3331 / NBRC 15819 / NCTC 12168 / Alc 37)</name>
    <name type="common">Ochrobactrum anthropi</name>
    <dbReference type="NCBI Taxonomy" id="439375"/>
    <lineage>
        <taxon>Bacteria</taxon>
        <taxon>Pseudomonadati</taxon>
        <taxon>Pseudomonadota</taxon>
        <taxon>Alphaproteobacteria</taxon>
        <taxon>Hyphomicrobiales</taxon>
        <taxon>Brucellaceae</taxon>
        <taxon>Brucella/Ochrobactrum group</taxon>
        <taxon>Brucella</taxon>
    </lineage>
</organism>
<feature type="chain" id="PRO_1000000881" description="Adenylosuccinate synthetase">
    <location>
        <begin position="1"/>
        <end position="429"/>
    </location>
</feature>
<feature type="active site" description="Proton acceptor" evidence="1">
    <location>
        <position position="13"/>
    </location>
</feature>
<feature type="active site" description="Proton donor" evidence="1">
    <location>
        <position position="41"/>
    </location>
</feature>
<feature type="binding site" evidence="1">
    <location>
        <begin position="12"/>
        <end position="18"/>
    </location>
    <ligand>
        <name>GTP</name>
        <dbReference type="ChEBI" id="CHEBI:37565"/>
    </ligand>
</feature>
<feature type="binding site" description="in other chain" evidence="1">
    <location>
        <begin position="13"/>
        <end position="16"/>
    </location>
    <ligand>
        <name>IMP</name>
        <dbReference type="ChEBI" id="CHEBI:58053"/>
        <note>ligand shared between dimeric partners</note>
    </ligand>
</feature>
<feature type="binding site" evidence="1">
    <location>
        <position position="13"/>
    </location>
    <ligand>
        <name>Mg(2+)</name>
        <dbReference type="ChEBI" id="CHEBI:18420"/>
    </ligand>
</feature>
<feature type="binding site" description="in other chain" evidence="1">
    <location>
        <begin position="38"/>
        <end position="41"/>
    </location>
    <ligand>
        <name>IMP</name>
        <dbReference type="ChEBI" id="CHEBI:58053"/>
        <note>ligand shared between dimeric partners</note>
    </ligand>
</feature>
<feature type="binding site" evidence="1">
    <location>
        <begin position="40"/>
        <end position="42"/>
    </location>
    <ligand>
        <name>GTP</name>
        <dbReference type="ChEBI" id="CHEBI:37565"/>
    </ligand>
</feature>
<feature type="binding site" evidence="1">
    <location>
        <position position="40"/>
    </location>
    <ligand>
        <name>Mg(2+)</name>
        <dbReference type="ChEBI" id="CHEBI:18420"/>
    </ligand>
</feature>
<feature type="binding site" description="in other chain" evidence="1">
    <location>
        <position position="129"/>
    </location>
    <ligand>
        <name>IMP</name>
        <dbReference type="ChEBI" id="CHEBI:58053"/>
        <note>ligand shared between dimeric partners</note>
    </ligand>
</feature>
<feature type="binding site" evidence="1">
    <location>
        <position position="143"/>
    </location>
    <ligand>
        <name>IMP</name>
        <dbReference type="ChEBI" id="CHEBI:58053"/>
        <note>ligand shared between dimeric partners</note>
    </ligand>
</feature>
<feature type="binding site" description="in other chain" evidence="1">
    <location>
        <position position="223"/>
    </location>
    <ligand>
        <name>IMP</name>
        <dbReference type="ChEBI" id="CHEBI:58053"/>
        <note>ligand shared between dimeric partners</note>
    </ligand>
</feature>
<feature type="binding site" description="in other chain" evidence="1">
    <location>
        <position position="238"/>
    </location>
    <ligand>
        <name>IMP</name>
        <dbReference type="ChEBI" id="CHEBI:58053"/>
        <note>ligand shared between dimeric partners</note>
    </ligand>
</feature>
<feature type="binding site" evidence="1">
    <location>
        <begin position="298"/>
        <end position="304"/>
    </location>
    <ligand>
        <name>substrate</name>
    </ligand>
</feature>
<feature type="binding site" description="in other chain" evidence="1">
    <location>
        <position position="302"/>
    </location>
    <ligand>
        <name>IMP</name>
        <dbReference type="ChEBI" id="CHEBI:58053"/>
        <note>ligand shared between dimeric partners</note>
    </ligand>
</feature>
<feature type="binding site" evidence="1">
    <location>
        <position position="304"/>
    </location>
    <ligand>
        <name>GTP</name>
        <dbReference type="ChEBI" id="CHEBI:37565"/>
    </ligand>
</feature>
<feature type="binding site" evidence="1">
    <location>
        <begin position="330"/>
        <end position="332"/>
    </location>
    <ligand>
        <name>GTP</name>
        <dbReference type="ChEBI" id="CHEBI:37565"/>
    </ligand>
</feature>
<feature type="binding site" evidence="1">
    <location>
        <begin position="412"/>
        <end position="414"/>
    </location>
    <ligand>
        <name>GTP</name>
        <dbReference type="ChEBI" id="CHEBI:37565"/>
    </ligand>
</feature>
<protein>
    <recommendedName>
        <fullName evidence="1">Adenylosuccinate synthetase</fullName>
        <shortName evidence="1">AMPSase</shortName>
        <shortName evidence="1">AdSS</shortName>
        <ecNumber evidence="1">6.3.4.4</ecNumber>
    </recommendedName>
    <alternativeName>
        <fullName evidence="1">IMP--aspartate ligase</fullName>
    </alternativeName>
</protein>
<keyword id="KW-0963">Cytoplasm</keyword>
<keyword id="KW-0342">GTP-binding</keyword>
<keyword id="KW-0436">Ligase</keyword>
<keyword id="KW-0460">Magnesium</keyword>
<keyword id="KW-0479">Metal-binding</keyword>
<keyword id="KW-0547">Nucleotide-binding</keyword>
<keyword id="KW-0658">Purine biosynthesis</keyword>
<keyword id="KW-1185">Reference proteome</keyword>
<accession>A6WY94</accession>
<evidence type="ECO:0000255" key="1">
    <source>
        <dbReference type="HAMAP-Rule" id="MF_00011"/>
    </source>
</evidence>
<gene>
    <name evidence="1" type="primary">purA</name>
    <name type="ordered locus">Oant_1231</name>
</gene>
<comment type="function">
    <text evidence="1">Plays an important role in the de novo pathway of purine nucleotide biosynthesis. Catalyzes the first committed step in the biosynthesis of AMP from IMP.</text>
</comment>
<comment type="catalytic activity">
    <reaction evidence="1">
        <text>IMP + L-aspartate + GTP = N(6)-(1,2-dicarboxyethyl)-AMP + GDP + phosphate + 2 H(+)</text>
        <dbReference type="Rhea" id="RHEA:15753"/>
        <dbReference type="ChEBI" id="CHEBI:15378"/>
        <dbReference type="ChEBI" id="CHEBI:29991"/>
        <dbReference type="ChEBI" id="CHEBI:37565"/>
        <dbReference type="ChEBI" id="CHEBI:43474"/>
        <dbReference type="ChEBI" id="CHEBI:57567"/>
        <dbReference type="ChEBI" id="CHEBI:58053"/>
        <dbReference type="ChEBI" id="CHEBI:58189"/>
        <dbReference type="EC" id="6.3.4.4"/>
    </reaction>
</comment>
<comment type="cofactor">
    <cofactor evidence="1">
        <name>Mg(2+)</name>
        <dbReference type="ChEBI" id="CHEBI:18420"/>
    </cofactor>
    <text evidence="1">Binds 1 Mg(2+) ion per subunit.</text>
</comment>
<comment type="pathway">
    <text evidence="1">Purine metabolism; AMP biosynthesis via de novo pathway; AMP from IMP: step 1/2.</text>
</comment>
<comment type="subunit">
    <text evidence="1">Homodimer.</text>
</comment>
<comment type="subcellular location">
    <subcellularLocation>
        <location evidence="1">Cytoplasm</location>
    </subcellularLocation>
</comment>
<comment type="similarity">
    <text evidence="1">Belongs to the adenylosuccinate synthetase family.</text>
</comment>
<reference key="1">
    <citation type="journal article" date="2011" name="J. Bacteriol.">
        <title>Genome of Ochrobactrum anthropi ATCC 49188 T, a versatile opportunistic pathogen and symbiont of several eukaryotic hosts.</title>
        <authorList>
            <person name="Chain P.S."/>
            <person name="Lang D.M."/>
            <person name="Comerci D.J."/>
            <person name="Malfatti S.A."/>
            <person name="Vergez L.M."/>
            <person name="Shin M."/>
            <person name="Ugalde R.A."/>
            <person name="Garcia E."/>
            <person name="Tolmasky M.E."/>
        </authorList>
    </citation>
    <scope>NUCLEOTIDE SEQUENCE [LARGE SCALE GENOMIC DNA]</scope>
    <source>
        <strain>ATCC 49188 / DSM 6882 / CCUG 24695 / JCM 21032 / LMG 3331 / NBRC 15819 / NCTC 12168 / Alc 37</strain>
    </source>
</reference>
<dbReference type="EC" id="6.3.4.4" evidence="1"/>
<dbReference type="EMBL" id="CP000758">
    <property type="protein sequence ID" value="ABS13948.1"/>
    <property type="molecule type" value="Genomic_DNA"/>
</dbReference>
<dbReference type="RefSeq" id="WP_010661360.1">
    <property type="nucleotide sequence ID" value="NC_009667.1"/>
</dbReference>
<dbReference type="SMR" id="A6WY94"/>
<dbReference type="STRING" id="439375.Oant_1231"/>
<dbReference type="KEGG" id="oan:Oant_1231"/>
<dbReference type="eggNOG" id="COG0104">
    <property type="taxonomic scope" value="Bacteria"/>
</dbReference>
<dbReference type="HOGENOM" id="CLU_029848_0_0_5"/>
<dbReference type="PhylomeDB" id="A6WY94"/>
<dbReference type="UniPathway" id="UPA00075">
    <property type="reaction ID" value="UER00335"/>
</dbReference>
<dbReference type="Proteomes" id="UP000002301">
    <property type="component" value="Chromosome 1"/>
</dbReference>
<dbReference type="GO" id="GO:0005737">
    <property type="term" value="C:cytoplasm"/>
    <property type="evidence" value="ECO:0007669"/>
    <property type="project" value="UniProtKB-SubCell"/>
</dbReference>
<dbReference type="GO" id="GO:0004019">
    <property type="term" value="F:adenylosuccinate synthase activity"/>
    <property type="evidence" value="ECO:0007669"/>
    <property type="project" value="UniProtKB-UniRule"/>
</dbReference>
<dbReference type="GO" id="GO:0005525">
    <property type="term" value="F:GTP binding"/>
    <property type="evidence" value="ECO:0007669"/>
    <property type="project" value="UniProtKB-UniRule"/>
</dbReference>
<dbReference type="GO" id="GO:0000287">
    <property type="term" value="F:magnesium ion binding"/>
    <property type="evidence" value="ECO:0007669"/>
    <property type="project" value="UniProtKB-UniRule"/>
</dbReference>
<dbReference type="GO" id="GO:0044208">
    <property type="term" value="P:'de novo' AMP biosynthetic process"/>
    <property type="evidence" value="ECO:0007669"/>
    <property type="project" value="UniProtKB-UniRule"/>
</dbReference>
<dbReference type="GO" id="GO:0046040">
    <property type="term" value="P:IMP metabolic process"/>
    <property type="evidence" value="ECO:0007669"/>
    <property type="project" value="TreeGrafter"/>
</dbReference>
<dbReference type="CDD" id="cd03108">
    <property type="entry name" value="AdSS"/>
    <property type="match status" value="1"/>
</dbReference>
<dbReference type="FunFam" id="1.10.300.10:FF:000001">
    <property type="entry name" value="Adenylosuccinate synthetase"/>
    <property type="match status" value="1"/>
</dbReference>
<dbReference type="FunFam" id="3.90.170.10:FF:000001">
    <property type="entry name" value="Adenylosuccinate synthetase"/>
    <property type="match status" value="1"/>
</dbReference>
<dbReference type="Gene3D" id="3.40.440.10">
    <property type="entry name" value="Adenylosuccinate Synthetase, subunit A, domain 1"/>
    <property type="match status" value="1"/>
</dbReference>
<dbReference type="Gene3D" id="1.10.300.10">
    <property type="entry name" value="Adenylosuccinate Synthetase, subunit A, domain 2"/>
    <property type="match status" value="1"/>
</dbReference>
<dbReference type="Gene3D" id="3.90.170.10">
    <property type="entry name" value="Adenylosuccinate Synthetase, subunit A, domain 3"/>
    <property type="match status" value="1"/>
</dbReference>
<dbReference type="HAMAP" id="MF_00011">
    <property type="entry name" value="Adenylosucc_synth"/>
    <property type="match status" value="1"/>
</dbReference>
<dbReference type="InterPro" id="IPR018220">
    <property type="entry name" value="Adenylosuccin_syn_GTP-bd"/>
</dbReference>
<dbReference type="InterPro" id="IPR033128">
    <property type="entry name" value="Adenylosuccin_syn_Lys_AS"/>
</dbReference>
<dbReference type="InterPro" id="IPR042109">
    <property type="entry name" value="Adenylosuccinate_synth_dom1"/>
</dbReference>
<dbReference type="InterPro" id="IPR042110">
    <property type="entry name" value="Adenylosuccinate_synth_dom2"/>
</dbReference>
<dbReference type="InterPro" id="IPR042111">
    <property type="entry name" value="Adenylosuccinate_synth_dom3"/>
</dbReference>
<dbReference type="InterPro" id="IPR001114">
    <property type="entry name" value="Adenylosuccinate_synthetase"/>
</dbReference>
<dbReference type="InterPro" id="IPR027417">
    <property type="entry name" value="P-loop_NTPase"/>
</dbReference>
<dbReference type="NCBIfam" id="NF002223">
    <property type="entry name" value="PRK01117.1"/>
    <property type="match status" value="1"/>
</dbReference>
<dbReference type="NCBIfam" id="TIGR00184">
    <property type="entry name" value="purA"/>
    <property type="match status" value="1"/>
</dbReference>
<dbReference type="PANTHER" id="PTHR11846">
    <property type="entry name" value="ADENYLOSUCCINATE SYNTHETASE"/>
    <property type="match status" value="1"/>
</dbReference>
<dbReference type="PANTHER" id="PTHR11846:SF0">
    <property type="entry name" value="ADENYLOSUCCINATE SYNTHETASE"/>
    <property type="match status" value="1"/>
</dbReference>
<dbReference type="Pfam" id="PF00709">
    <property type="entry name" value="Adenylsucc_synt"/>
    <property type="match status" value="1"/>
</dbReference>
<dbReference type="SMART" id="SM00788">
    <property type="entry name" value="Adenylsucc_synt"/>
    <property type="match status" value="1"/>
</dbReference>
<dbReference type="SUPFAM" id="SSF52540">
    <property type="entry name" value="P-loop containing nucleoside triphosphate hydrolases"/>
    <property type="match status" value="1"/>
</dbReference>
<dbReference type="PROSITE" id="PS01266">
    <property type="entry name" value="ADENYLOSUCCIN_SYN_1"/>
    <property type="match status" value="1"/>
</dbReference>
<dbReference type="PROSITE" id="PS00513">
    <property type="entry name" value="ADENYLOSUCCIN_SYN_2"/>
    <property type="match status" value="1"/>
</dbReference>